<name>DEOC_CLOB1</name>
<protein>
    <recommendedName>
        <fullName evidence="1">Deoxyribose-phosphate aldolase</fullName>
        <shortName evidence="1">DERA</shortName>
        <ecNumber evidence="1">4.1.2.4</ecNumber>
    </recommendedName>
    <alternativeName>
        <fullName evidence="1">2-deoxy-D-ribose 5-phosphate aldolase</fullName>
    </alternativeName>
    <alternativeName>
        <fullName evidence="1">Phosphodeoxyriboaldolase</fullName>
        <shortName evidence="1">Deoxyriboaldolase</shortName>
    </alternativeName>
</protein>
<gene>
    <name evidence="1" type="primary">deoC</name>
    <name type="ordered locus">CLB_1583</name>
</gene>
<evidence type="ECO:0000255" key="1">
    <source>
        <dbReference type="HAMAP-Rule" id="MF_00114"/>
    </source>
</evidence>
<organism>
    <name type="scientific">Clostridium botulinum (strain ATCC 19397 / Type A)</name>
    <dbReference type="NCBI Taxonomy" id="441770"/>
    <lineage>
        <taxon>Bacteria</taxon>
        <taxon>Bacillati</taxon>
        <taxon>Bacillota</taxon>
        <taxon>Clostridia</taxon>
        <taxon>Eubacteriales</taxon>
        <taxon>Clostridiaceae</taxon>
        <taxon>Clostridium</taxon>
    </lineage>
</organism>
<comment type="function">
    <text evidence="1">Catalyzes a reversible aldol reaction between acetaldehyde and D-glyceraldehyde 3-phosphate to generate 2-deoxy-D-ribose 5-phosphate.</text>
</comment>
<comment type="catalytic activity">
    <reaction evidence="1">
        <text>2-deoxy-D-ribose 5-phosphate = D-glyceraldehyde 3-phosphate + acetaldehyde</text>
        <dbReference type="Rhea" id="RHEA:12821"/>
        <dbReference type="ChEBI" id="CHEBI:15343"/>
        <dbReference type="ChEBI" id="CHEBI:59776"/>
        <dbReference type="ChEBI" id="CHEBI:62877"/>
        <dbReference type="EC" id="4.1.2.4"/>
    </reaction>
</comment>
<comment type="pathway">
    <text evidence="1">Carbohydrate degradation; 2-deoxy-D-ribose 1-phosphate degradation; D-glyceraldehyde 3-phosphate and acetaldehyde from 2-deoxy-alpha-D-ribose 1-phosphate: step 2/2.</text>
</comment>
<comment type="subcellular location">
    <subcellularLocation>
        <location evidence="1">Cytoplasm</location>
    </subcellularLocation>
</comment>
<comment type="similarity">
    <text evidence="1">Belongs to the DeoC/FbaB aldolase family. DeoC type 1 subfamily.</text>
</comment>
<accession>A7FU73</accession>
<dbReference type="EC" id="4.1.2.4" evidence="1"/>
<dbReference type="EMBL" id="CP000726">
    <property type="protein sequence ID" value="ABS33131.1"/>
    <property type="molecule type" value="Genomic_DNA"/>
</dbReference>
<dbReference type="RefSeq" id="WP_011949107.1">
    <property type="nucleotide sequence ID" value="NC_009697.1"/>
</dbReference>
<dbReference type="SMR" id="A7FU73"/>
<dbReference type="GeneID" id="5185818"/>
<dbReference type="KEGG" id="cba:CLB_1583"/>
<dbReference type="HOGENOM" id="CLU_053595_0_1_9"/>
<dbReference type="UniPathway" id="UPA00002">
    <property type="reaction ID" value="UER00468"/>
</dbReference>
<dbReference type="GO" id="GO:0005737">
    <property type="term" value="C:cytoplasm"/>
    <property type="evidence" value="ECO:0007669"/>
    <property type="project" value="UniProtKB-SubCell"/>
</dbReference>
<dbReference type="GO" id="GO:0004139">
    <property type="term" value="F:deoxyribose-phosphate aldolase activity"/>
    <property type="evidence" value="ECO:0007669"/>
    <property type="project" value="UniProtKB-UniRule"/>
</dbReference>
<dbReference type="GO" id="GO:0006018">
    <property type="term" value="P:2-deoxyribose 1-phosphate catabolic process"/>
    <property type="evidence" value="ECO:0007669"/>
    <property type="project" value="UniProtKB-UniRule"/>
</dbReference>
<dbReference type="GO" id="GO:0016052">
    <property type="term" value="P:carbohydrate catabolic process"/>
    <property type="evidence" value="ECO:0007669"/>
    <property type="project" value="TreeGrafter"/>
</dbReference>
<dbReference type="GO" id="GO:0009264">
    <property type="term" value="P:deoxyribonucleotide catabolic process"/>
    <property type="evidence" value="ECO:0007669"/>
    <property type="project" value="InterPro"/>
</dbReference>
<dbReference type="CDD" id="cd00959">
    <property type="entry name" value="DeoC"/>
    <property type="match status" value="1"/>
</dbReference>
<dbReference type="FunFam" id="3.20.20.70:FF:000044">
    <property type="entry name" value="Deoxyribose-phosphate aldolase"/>
    <property type="match status" value="1"/>
</dbReference>
<dbReference type="Gene3D" id="3.20.20.70">
    <property type="entry name" value="Aldolase class I"/>
    <property type="match status" value="1"/>
</dbReference>
<dbReference type="HAMAP" id="MF_00114">
    <property type="entry name" value="DeoC_type1"/>
    <property type="match status" value="1"/>
</dbReference>
<dbReference type="InterPro" id="IPR013785">
    <property type="entry name" value="Aldolase_TIM"/>
</dbReference>
<dbReference type="InterPro" id="IPR011343">
    <property type="entry name" value="DeoC"/>
</dbReference>
<dbReference type="InterPro" id="IPR002915">
    <property type="entry name" value="DeoC/FbaB/LacD_aldolase"/>
</dbReference>
<dbReference type="InterPro" id="IPR028581">
    <property type="entry name" value="DeoC_typeI"/>
</dbReference>
<dbReference type="NCBIfam" id="TIGR00126">
    <property type="entry name" value="deoC"/>
    <property type="match status" value="1"/>
</dbReference>
<dbReference type="PANTHER" id="PTHR10889">
    <property type="entry name" value="DEOXYRIBOSE-PHOSPHATE ALDOLASE"/>
    <property type="match status" value="1"/>
</dbReference>
<dbReference type="PANTHER" id="PTHR10889:SF1">
    <property type="entry name" value="DEOXYRIBOSE-PHOSPHATE ALDOLASE"/>
    <property type="match status" value="1"/>
</dbReference>
<dbReference type="Pfam" id="PF01791">
    <property type="entry name" value="DeoC"/>
    <property type="match status" value="1"/>
</dbReference>
<dbReference type="PIRSF" id="PIRSF001357">
    <property type="entry name" value="DeoC"/>
    <property type="match status" value="1"/>
</dbReference>
<dbReference type="SMART" id="SM01133">
    <property type="entry name" value="DeoC"/>
    <property type="match status" value="1"/>
</dbReference>
<dbReference type="SUPFAM" id="SSF51569">
    <property type="entry name" value="Aldolase"/>
    <property type="match status" value="1"/>
</dbReference>
<proteinExistence type="inferred from homology"/>
<keyword id="KW-0963">Cytoplasm</keyword>
<keyword id="KW-0456">Lyase</keyword>
<keyword id="KW-0704">Schiff base</keyword>
<sequence>MKLSKYIDHTLLKPQATEKDILKLIEEAKTYDFASVCVNPSWVKLAYENLKDTDVKVCTVVGFPLGATSTASKVYETKVAIKDGADEIDMVISVGQLKSGNDEYVKEEIKKIVEASKNKLVKVIIETCLLTEEEKVKACTLSKEAGADYVKTSTGFSTGGAKPEDIKLMRETVGKDMGVKASGGIHTREEMEVMIENGATRIGASCGVELVK</sequence>
<reference key="1">
    <citation type="journal article" date="2007" name="PLoS ONE">
        <title>Analysis of the neurotoxin complex genes in Clostridium botulinum A1-A4 and B1 strains: BoNT/A3, /Ba4 and /B1 clusters are located within plasmids.</title>
        <authorList>
            <person name="Smith T.J."/>
            <person name="Hill K.K."/>
            <person name="Foley B.T."/>
            <person name="Detter J.C."/>
            <person name="Munk A.C."/>
            <person name="Bruce D.C."/>
            <person name="Doggett N.A."/>
            <person name="Smith L.A."/>
            <person name="Marks J.D."/>
            <person name="Xie G."/>
            <person name="Brettin T.S."/>
        </authorList>
    </citation>
    <scope>NUCLEOTIDE SEQUENCE [LARGE SCALE GENOMIC DNA]</scope>
    <source>
        <strain>ATCC 19397 / Type A</strain>
    </source>
</reference>
<feature type="chain" id="PRO_1000057748" description="Deoxyribose-phosphate aldolase">
    <location>
        <begin position="1"/>
        <end position="212"/>
    </location>
</feature>
<feature type="active site" description="Proton donor/acceptor" evidence="1">
    <location>
        <position position="89"/>
    </location>
</feature>
<feature type="active site" description="Schiff-base intermediate with acetaldehyde" evidence="1">
    <location>
        <position position="151"/>
    </location>
</feature>
<feature type="active site" description="Proton donor/acceptor" evidence="1">
    <location>
        <position position="180"/>
    </location>
</feature>